<organismHost>
    <name type="scientific">Acanthamoeba polyphaga</name>
    <name type="common">Amoeba</name>
    <dbReference type="NCBI Taxonomy" id="5757"/>
</organismHost>
<gene>
    <name type="ordered locus">MIMI_R472</name>
</gene>
<feature type="chain" id="PRO_0000244018" description="Uncharacterized protein R472">
    <location>
        <begin position="1"/>
        <end position="1700"/>
    </location>
</feature>
<feature type="transmembrane region" description="Helical" evidence="1">
    <location>
        <begin position="986"/>
        <end position="1006"/>
    </location>
</feature>
<feature type="region of interest" description="Disordered" evidence="2">
    <location>
        <begin position="1650"/>
        <end position="1700"/>
    </location>
</feature>
<feature type="coiled-coil region" evidence="1">
    <location>
        <begin position="1246"/>
        <end position="1278"/>
    </location>
</feature>
<feature type="coiled-coil region" evidence="1">
    <location>
        <begin position="1657"/>
        <end position="1684"/>
    </location>
</feature>
<feature type="compositionally biased region" description="Acidic residues" evidence="2">
    <location>
        <begin position="1651"/>
        <end position="1700"/>
    </location>
</feature>
<proteinExistence type="evidence at protein level"/>
<dbReference type="EMBL" id="AY653733">
    <property type="protein sequence ID" value="AAV50738.1"/>
    <property type="molecule type" value="Genomic_DNA"/>
</dbReference>
<dbReference type="KEGG" id="vg:9925097"/>
<dbReference type="Proteomes" id="UP000001134">
    <property type="component" value="Genome"/>
</dbReference>
<dbReference type="GO" id="GO:0033644">
    <property type="term" value="C:host cell membrane"/>
    <property type="evidence" value="ECO:0007669"/>
    <property type="project" value="UniProtKB-SubCell"/>
</dbReference>
<dbReference type="GO" id="GO:0016020">
    <property type="term" value="C:membrane"/>
    <property type="evidence" value="ECO:0007669"/>
    <property type="project" value="UniProtKB-KW"/>
</dbReference>
<dbReference type="GO" id="GO:0044423">
    <property type="term" value="C:virion component"/>
    <property type="evidence" value="ECO:0007669"/>
    <property type="project" value="UniProtKB-KW"/>
</dbReference>
<accession>Q5UQE4</accession>
<sequence length="1700" mass="199851">MYVNQIDDIIDGILNKLYFEGLSNDESFNSIVNSNKINFVEYREQINKFIDDFVKSIDLTEIRKIINNKDNLNRIIDIIKRYVAYYYFLSIAYNYTGSLKDFRNNMIQYSKLQESSTFIIRNFFDTENNYQLIKYFKIIKDTSKILLMTDLQRKTLNPLDVKDTIDFLNGLGKEYINNYLLMITVVDNEDTVNINPHNLIKTIVFGELYKNQERNLVFEILNEIEEDKEEYTYIDIVVSSDETNDLNNFRQIFLGEDDAEARARDLFELANETNRVTTIETVETKNNDLIALKIITPIVDDFLRYHRDTERLDAESGPVNIPIVSNNNSKNVQLALLYQQRKKKENTRAQLVINKLDAILDYYSPNVKNNPEFISEIKKYFQNPLSYRKAVLHNYLDEVNVIDKIRKQGKKAMENNEYFLELMQIITHAYFNFKDFKNFGTSINLFNTKPVNMLRYSNIEFQNQMSNLEVDVHTGIEGQSVNLVGLAIGPFNDEPVSCTKKSDLLDIRKIQITYMKNDQPVTRSTDNGYKAFLKIIKHFYINTLEIREEPEFSIYNNFDDIRKLNPDIFGKMIYWTYNTELDTFEMDTYENIKSNSVQDIIRFMNAMIYDKIMDFLDKKLVLLIETHTNLSLSKIESLIQIFSNMNQLSIDQEERRDLVISNFLQKKSQETTIVPKKNLEIIPLPEYQPLNLKKPFVIGISMINPLNPQPYIKLEAYSRTTKDRGIIQATHGKCKHESEWNEINKVKNQNLNKYNSLVTAFIEKYHLETTQLDYVCKVCGQILPLKRYVQDGSFNNNTQQFVTAYVPIDIPLEEIKEYRKYVLAIRYIDALINRVSLITNTNMLVGTNTNVRQRRKGLVKNIIDIILKHNSVNMRKNISDVERSEYLAKKYNINKDLNEVYFFELDDSIFNFTPTASNTEITLNKLKFNNILLYFILIFITELNGPQITMMATDKIAGNIYVFLKYGQKLFGDLLIKTNINSNETAPITQYPVLCYLLYLLSYYLVKYKLWYQPGENTKVYNPYYSKVIINSFVDLFNGISSDAGRITDDYVYKLTVSKMYTQLNTTYRNNEIINILRRNQSKYDTRSSGIDTTQVTTENEIPTYPIANPINIPVKPRAIPDFKKSSGIIFDREDKILYPIQLTNTDITNCPIGSYHAWVSDGHDIRCTICGEKGSEVTGSVIRLDANYYYSLNNIANRRCIRGTLHDFIDKNGKLVCSICGHTPNETYDKPDLDKLMDNINKIDDQNAENLLRNIHNQQIKYENQQKVVEDFIREIKTDYAKDSNNKLYGRLGPICDKLITIFETYLGSNVNLDIDKYPVYLRNNIYIIDHSYNGTPLDKPVIFSQNENRILFRENHQFFKTDVYYYTDNRLQIDVFYHAVTLKLLGYKEKHKEYTRVAKTNSYLKINYSIMERLLMLGYKTKYIDIEDNFVRNSSRIKDVNTNYFQIIDNLIKDHINKIKKIIDKFSSTIYKIKNYQNQLNEEQEPIYLQSSQDIDKLISKYFNIIKIFNIGEDDKAFDNWNYLRTNFEYQEINWLDTNVRPSENMYVNSELVNYYDISSSEMMYYLVDQLISIIDSNPEKITRSNLCQMMVEIIMYIYNIYNIDEYKNILEFKRFDYIINGSSVMVDMLRRGQGLEQSKELEQHLDDTEPDIMQDMDGEPQEADELEDLKEEAESLDIEGDYFAEEDEDYAQEDFIE</sequence>
<protein>
    <recommendedName>
        <fullName>Uncharacterized protein R472</fullName>
    </recommendedName>
</protein>
<keyword id="KW-0175">Coiled coil</keyword>
<keyword id="KW-1043">Host membrane</keyword>
<keyword id="KW-0472">Membrane</keyword>
<keyword id="KW-1185">Reference proteome</keyword>
<keyword id="KW-0812">Transmembrane</keyword>
<keyword id="KW-1133">Transmembrane helix</keyword>
<keyword id="KW-0946">Virion</keyword>
<comment type="subcellular location">
    <subcellularLocation>
        <location evidence="4">Host membrane</location>
        <topology evidence="4">Single-pass membrane protein</topology>
    </subcellularLocation>
    <subcellularLocation>
        <location evidence="3">Virion</location>
    </subcellularLocation>
</comment>
<name>YR472_MIMIV</name>
<reference key="1">
    <citation type="journal article" date="2004" name="Science">
        <title>The 1.2-megabase genome sequence of Mimivirus.</title>
        <authorList>
            <person name="Raoult D."/>
            <person name="Audic S."/>
            <person name="Robert C."/>
            <person name="Abergel C."/>
            <person name="Renesto P."/>
            <person name="Ogata H."/>
            <person name="La Scola B."/>
            <person name="Susan M."/>
            <person name="Claverie J.-M."/>
        </authorList>
    </citation>
    <scope>NUCLEOTIDE SEQUENCE [LARGE SCALE GENOMIC DNA]</scope>
    <source>
        <strain>Rowbotham-Bradford</strain>
    </source>
</reference>
<reference key="2">
    <citation type="journal article" date="2006" name="J. Virol.">
        <title>Mimivirus giant particles incorporate a large fraction of anonymous and unique gene products.</title>
        <authorList>
            <person name="Renesto P."/>
            <person name="Abergel C."/>
            <person name="Decloquement P."/>
            <person name="Moinier D."/>
            <person name="Azza S."/>
            <person name="Ogata H."/>
            <person name="Fourquet P."/>
            <person name="Gorvel J.-P."/>
            <person name="Claverie J.-M."/>
            <person name="Raoult D."/>
        </authorList>
    </citation>
    <scope>IDENTIFICATION BY MASS SPECTROMETRY [LARGE SCALE ANALYSIS]</scope>
    <scope>SUBCELLULAR LOCATION</scope>
</reference>
<evidence type="ECO:0000255" key="1"/>
<evidence type="ECO:0000256" key="2">
    <source>
        <dbReference type="SAM" id="MobiDB-lite"/>
    </source>
</evidence>
<evidence type="ECO:0000269" key="3">
    <source>
    </source>
</evidence>
<evidence type="ECO:0000305" key="4"/>
<organism>
    <name type="scientific">Acanthamoeba polyphaga mimivirus</name>
    <name type="common">APMV</name>
    <dbReference type="NCBI Taxonomy" id="212035"/>
    <lineage>
        <taxon>Viruses</taxon>
        <taxon>Varidnaviria</taxon>
        <taxon>Bamfordvirae</taxon>
        <taxon>Nucleocytoviricota</taxon>
        <taxon>Megaviricetes</taxon>
        <taxon>Imitervirales</taxon>
        <taxon>Mimiviridae</taxon>
        <taxon>Megamimivirinae</taxon>
        <taxon>Mimivirus</taxon>
        <taxon>Mimivirus bradfordmassiliense</taxon>
    </lineage>
</organism>